<feature type="chain" id="PRO_0000134223" description="Small ribosomal subunit protein uS2">
    <location>
        <begin position="1"/>
        <end position="247"/>
    </location>
</feature>
<accession>Q8XZJ1</accession>
<gene>
    <name evidence="1" type="primary">rpsB</name>
    <name type="ordered locus">RSc1404</name>
    <name type="ORF">RS05288</name>
</gene>
<dbReference type="EMBL" id="AL646052">
    <property type="protein sequence ID" value="CAD15106.1"/>
    <property type="molecule type" value="Genomic_DNA"/>
</dbReference>
<dbReference type="RefSeq" id="WP_011001353.1">
    <property type="nucleotide sequence ID" value="NC_003295.1"/>
</dbReference>
<dbReference type="SMR" id="Q8XZJ1"/>
<dbReference type="STRING" id="267608.RSc1404"/>
<dbReference type="EnsemblBacteria" id="CAD15106">
    <property type="protein sequence ID" value="CAD15106"/>
    <property type="gene ID" value="RSc1404"/>
</dbReference>
<dbReference type="KEGG" id="rso:RSc1404"/>
<dbReference type="eggNOG" id="COG0052">
    <property type="taxonomic scope" value="Bacteria"/>
</dbReference>
<dbReference type="HOGENOM" id="CLU_040318_1_2_4"/>
<dbReference type="Proteomes" id="UP000001436">
    <property type="component" value="Chromosome"/>
</dbReference>
<dbReference type="GO" id="GO:0022627">
    <property type="term" value="C:cytosolic small ribosomal subunit"/>
    <property type="evidence" value="ECO:0007669"/>
    <property type="project" value="TreeGrafter"/>
</dbReference>
<dbReference type="GO" id="GO:0003735">
    <property type="term" value="F:structural constituent of ribosome"/>
    <property type="evidence" value="ECO:0007669"/>
    <property type="project" value="InterPro"/>
</dbReference>
<dbReference type="GO" id="GO:0006412">
    <property type="term" value="P:translation"/>
    <property type="evidence" value="ECO:0007669"/>
    <property type="project" value="UniProtKB-UniRule"/>
</dbReference>
<dbReference type="CDD" id="cd01425">
    <property type="entry name" value="RPS2"/>
    <property type="match status" value="1"/>
</dbReference>
<dbReference type="FunFam" id="1.10.287.610:FF:000001">
    <property type="entry name" value="30S ribosomal protein S2"/>
    <property type="match status" value="1"/>
</dbReference>
<dbReference type="Gene3D" id="3.40.50.10490">
    <property type="entry name" value="Glucose-6-phosphate isomerase like protein, domain 1"/>
    <property type="match status" value="1"/>
</dbReference>
<dbReference type="Gene3D" id="1.10.287.610">
    <property type="entry name" value="Helix hairpin bin"/>
    <property type="match status" value="1"/>
</dbReference>
<dbReference type="HAMAP" id="MF_00291_B">
    <property type="entry name" value="Ribosomal_uS2_B"/>
    <property type="match status" value="1"/>
</dbReference>
<dbReference type="InterPro" id="IPR001865">
    <property type="entry name" value="Ribosomal_uS2"/>
</dbReference>
<dbReference type="InterPro" id="IPR005706">
    <property type="entry name" value="Ribosomal_uS2_bac/mit/plastid"/>
</dbReference>
<dbReference type="InterPro" id="IPR018130">
    <property type="entry name" value="Ribosomal_uS2_CS"/>
</dbReference>
<dbReference type="InterPro" id="IPR023591">
    <property type="entry name" value="Ribosomal_uS2_flav_dom_sf"/>
</dbReference>
<dbReference type="NCBIfam" id="TIGR01011">
    <property type="entry name" value="rpsB_bact"/>
    <property type="match status" value="1"/>
</dbReference>
<dbReference type="PANTHER" id="PTHR12534">
    <property type="entry name" value="30S RIBOSOMAL PROTEIN S2 PROKARYOTIC AND ORGANELLAR"/>
    <property type="match status" value="1"/>
</dbReference>
<dbReference type="PANTHER" id="PTHR12534:SF0">
    <property type="entry name" value="SMALL RIBOSOMAL SUBUNIT PROTEIN US2M"/>
    <property type="match status" value="1"/>
</dbReference>
<dbReference type="Pfam" id="PF00318">
    <property type="entry name" value="Ribosomal_S2"/>
    <property type="match status" value="1"/>
</dbReference>
<dbReference type="PRINTS" id="PR00395">
    <property type="entry name" value="RIBOSOMALS2"/>
</dbReference>
<dbReference type="SUPFAM" id="SSF52313">
    <property type="entry name" value="Ribosomal protein S2"/>
    <property type="match status" value="1"/>
</dbReference>
<dbReference type="PROSITE" id="PS00962">
    <property type="entry name" value="RIBOSOMAL_S2_1"/>
    <property type="match status" value="1"/>
</dbReference>
<reference key="1">
    <citation type="journal article" date="2002" name="Nature">
        <title>Genome sequence of the plant pathogen Ralstonia solanacearum.</title>
        <authorList>
            <person name="Salanoubat M."/>
            <person name="Genin S."/>
            <person name="Artiguenave F."/>
            <person name="Gouzy J."/>
            <person name="Mangenot S."/>
            <person name="Arlat M."/>
            <person name="Billault A."/>
            <person name="Brottier P."/>
            <person name="Camus J.-C."/>
            <person name="Cattolico L."/>
            <person name="Chandler M."/>
            <person name="Choisne N."/>
            <person name="Claudel-Renard C."/>
            <person name="Cunnac S."/>
            <person name="Demange N."/>
            <person name="Gaspin C."/>
            <person name="Lavie M."/>
            <person name="Moisan A."/>
            <person name="Robert C."/>
            <person name="Saurin W."/>
            <person name="Schiex T."/>
            <person name="Siguier P."/>
            <person name="Thebault P."/>
            <person name="Whalen M."/>
            <person name="Wincker P."/>
            <person name="Levy M."/>
            <person name="Weissenbach J."/>
            <person name="Boucher C.A."/>
        </authorList>
    </citation>
    <scope>NUCLEOTIDE SEQUENCE [LARGE SCALE GENOMIC DNA]</scope>
    <source>
        <strain>ATCC BAA-1114 / GMI1000</strain>
    </source>
</reference>
<organism>
    <name type="scientific">Ralstonia nicotianae (strain ATCC BAA-1114 / GMI1000)</name>
    <name type="common">Ralstonia solanacearum</name>
    <dbReference type="NCBI Taxonomy" id="267608"/>
    <lineage>
        <taxon>Bacteria</taxon>
        <taxon>Pseudomonadati</taxon>
        <taxon>Pseudomonadota</taxon>
        <taxon>Betaproteobacteria</taxon>
        <taxon>Burkholderiales</taxon>
        <taxon>Burkholderiaceae</taxon>
        <taxon>Ralstonia</taxon>
        <taxon>Ralstonia solanacearum species complex</taxon>
    </lineage>
</organism>
<name>RS2_RALN1</name>
<sequence>MSVTMREMLEAGVHFGHQTRFWNPKMAPFIFGHRNKIHIINLEKTLPMYLDALKYVRQLAANRGTILFVGTKRQSREILAEEAARAGMPYVDSRWLGGMLTNFKTVKISIKRLKDMEAAKEAGALESMSKKEALMFEREMEKLEKSIGGIKDMGGIPDAIFVVDVGYHKIAVTEAAKLGIPVIGVVDTNHSPEGIDYVIPGNDDSSKAVALYVRGVADAILEGRANAVQEVVEAARGGDDFVEVQEG</sequence>
<protein>
    <recommendedName>
        <fullName evidence="1">Small ribosomal subunit protein uS2</fullName>
    </recommendedName>
    <alternativeName>
        <fullName evidence="2">30S ribosomal protein S2</fullName>
    </alternativeName>
</protein>
<comment type="similarity">
    <text evidence="1">Belongs to the universal ribosomal protein uS2 family.</text>
</comment>
<proteinExistence type="inferred from homology"/>
<evidence type="ECO:0000255" key="1">
    <source>
        <dbReference type="HAMAP-Rule" id="MF_00291"/>
    </source>
</evidence>
<evidence type="ECO:0000305" key="2"/>
<keyword id="KW-1185">Reference proteome</keyword>
<keyword id="KW-0687">Ribonucleoprotein</keyword>
<keyword id="KW-0689">Ribosomal protein</keyword>